<accession>A5IHU4</accession>
<sequence>MSLNSAEKAEIINEYKRGDKDTGSPEVQVSLITSRIKYLTDHFKENKKDFHSRRGLQELVNKRRKLLKYLKRNDQDRYQTLIQNLGLRDSY</sequence>
<comment type="function">
    <text evidence="1">One of the primary rRNA binding proteins, it binds directly to 16S rRNA where it helps nucleate assembly of the platform of the 30S subunit by binding and bridging several RNA helices of the 16S rRNA.</text>
</comment>
<comment type="function">
    <text evidence="1">Forms an intersubunit bridge (bridge B4) with the 23S rRNA of the 50S subunit in the ribosome.</text>
</comment>
<comment type="subunit">
    <text evidence="1">Part of the 30S ribosomal subunit. Forms a bridge to the 50S subunit in the 70S ribosome, contacting the 23S rRNA.</text>
</comment>
<comment type="similarity">
    <text evidence="1">Belongs to the universal ribosomal protein uS15 family.</text>
</comment>
<dbReference type="EMBL" id="CP000675">
    <property type="protein sequence ID" value="ABQ56944.1"/>
    <property type="molecule type" value="Genomic_DNA"/>
</dbReference>
<dbReference type="RefSeq" id="WP_010948459.1">
    <property type="nucleotide sequence ID" value="NZ_JAPMSS010000004.1"/>
</dbReference>
<dbReference type="SMR" id="A5IHU4"/>
<dbReference type="GeneID" id="57036767"/>
<dbReference type="KEGG" id="lpc:LPC_3054"/>
<dbReference type="HOGENOM" id="CLU_148518_0_0_6"/>
<dbReference type="GO" id="GO:0022627">
    <property type="term" value="C:cytosolic small ribosomal subunit"/>
    <property type="evidence" value="ECO:0007669"/>
    <property type="project" value="TreeGrafter"/>
</dbReference>
<dbReference type="GO" id="GO:0019843">
    <property type="term" value="F:rRNA binding"/>
    <property type="evidence" value="ECO:0007669"/>
    <property type="project" value="UniProtKB-UniRule"/>
</dbReference>
<dbReference type="GO" id="GO:0003735">
    <property type="term" value="F:structural constituent of ribosome"/>
    <property type="evidence" value="ECO:0007669"/>
    <property type="project" value="InterPro"/>
</dbReference>
<dbReference type="GO" id="GO:0006412">
    <property type="term" value="P:translation"/>
    <property type="evidence" value="ECO:0007669"/>
    <property type="project" value="UniProtKB-UniRule"/>
</dbReference>
<dbReference type="CDD" id="cd00353">
    <property type="entry name" value="Ribosomal_S15p_S13e"/>
    <property type="match status" value="1"/>
</dbReference>
<dbReference type="FunFam" id="1.10.287.10:FF:000002">
    <property type="entry name" value="30S ribosomal protein S15"/>
    <property type="match status" value="1"/>
</dbReference>
<dbReference type="Gene3D" id="6.10.250.3130">
    <property type="match status" value="1"/>
</dbReference>
<dbReference type="Gene3D" id="1.10.287.10">
    <property type="entry name" value="S15/NS1, RNA-binding"/>
    <property type="match status" value="1"/>
</dbReference>
<dbReference type="HAMAP" id="MF_01343_B">
    <property type="entry name" value="Ribosomal_uS15_B"/>
    <property type="match status" value="1"/>
</dbReference>
<dbReference type="InterPro" id="IPR000589">
    <property type="entry name" value="Ribosomal_uS15"/>
</dbReference>
<dbReference type="InterPro" id="IPR005290">
    <property type="entry name" value="Ribosomal_uS15_bac-type"/>
</dbReference>
<dbReference type="InterPro" id="IPR009068">
    <property type="entry name" value="uS15_NS1_RNA-bd_sf"/>
</dbReference>
<dbReference type="NCBIfam" id="TIGR00952">
    <property type="entry name" value="S15_bact"/>
    <property type="match status" value="1"/>
</dbReference>
<dbReference type="PANTHER" id="PTHR23321">
    <property type="entry name" value="RIBOSOMAL PROTEIN S15, BACTERIAL AND ORGANELLAR"/>
    <property type="match status" value="1"/>
</dbReference>
<dbReference type="PANTHER" id="PTHR23321:SF26">
    <property type="entry name" value="SMALL RIBOSOMAL SUBUNIT PROTEIN US15M"/>
    <property type="match status" value="1"/>
</dbReference>
<dbReference type="Pfam" id="PF00312">
    <property type="entry name" value="Ribosomal_S15"/>
    <property type="match status" value="1"/>
</dbReference>
<dbReference type="SMART" id="SM01387">
    <property type="entry name" value="Ribosomal_S15"/>
    <property type="match status" value="1"/>
</dbReference>
<dbReference type="SUPFAM" id="SSF47060">
    <property type="entry name" value="S15/NS1 RNA-binding domain"/>
    <property type="match status" value="1"/>
</dbReference>
<dbReference type="PROSITE" id="PS00362">
    <property type="entry name" value="RIBOSOMAL_S15"/>
    <property type="match status" value="1"/>
</dbReference>
<organism>
    <name type="scientific">Legionella pneumophila (strain Corby)</name>
    <dbReference type="NCBI Taxonomy" id="400673"/>
    <lineage>
        <taxon>Bacteria</taxon>
        <taxon>Pseudomonadati</taxon>
        <taxon>Pseudomonadota</taxon>
        <taxon>Gammaproteobacteria</taxon>
        <taxon>Legionellales</taxon>
        <taxon>Legionellaceae</taxon>
        <taxon>Legionella</taxon>
    </lineage>
</organism>
<evidence type="ECO:0000255" key="1">
    <source>
        <dbReference type="HAMAP-Rule" id="MF_01343"/>
    </source>
</evidence>
<evidence type="ECO:0000305" key="2"/>
<name>RS15_LEGPC</name>
<reference key="1">
    <citation type="submission" date="2006-11" db="EMBL/GenBank/DDBJ databases">
        <title>Identification and characterization of a new conjugation/ type IVA secretion system (trb/tra) of L. pneumophila Corby localized on a mobile genomic island.</title>
        <authorList>
            <person name="Gloeckner G."/>
            <person name="Albert-Weissenberger C."/>
            <person name="Weinmann E."/>
            <person name="Jacobi S."/>
            <person name="Schunder E."/>
            <person name="Steinert M."/>
            <person name="Buchrieser C."/>
            <person name="Hacker J."/>
            <person name="Heuner K."/>
        </authorList>
    </citation>
    <scope>NUCLEOTIDE SEQUENCE [LARGE SCALE GENOMIC DNA]</scope>
    <source>
        <strain>Corby</strain>
    </source>
</reference>
<protein>
    <recommendedName>
        <fullName evidence="1">Small ribosomal subunit protein uS15</fullName>
    </recommendedName>
    <alternativeName>
        <fullName evidence="2">30S ribosomal protein S15</fullName>
    </alternativeName>
</protein>
<feature type="chain" id="PRO_1000054802" description="Small ribosomal subunit protein uS15">
    <location>
        <begin position="1"/>
        <end position="91"/>
    </location>
</feature>
<keyword id="KW-0687">Ribonucleoprotein</keyword>
<keyword id="KW-0689">Ribosomal protein</keyword>
<keyword id="KW-0694">RNA-binding</keyword>
<keyword id="KW-0699">rRNA-binding</keyword>
<gene>
    <name evidence="1" type="primary">rpsO</name>
    <name type="ordered locus">LPC_3054</name>
</gene>
<proteinExistence type="inferred from homology"/>